<protein>
    <recommendedName>
        <fullName>Protein YOP1</fullName>
    </recommendedName>
</protein>
<gene>
    <name type="primary">YOP1</name>
    <name type="ordered locus">DEHA2B11264g</name>
</gene>
<accession>Q6BWH8</accession>
<reference key="1">
    <citation type="journal article" date="2004" name="Nature">
        <title>Genome evolution in yeasts.</title>
        <authorList>
            <person name="Dujon B."/>
            <person name="Sherman D."/>
            <person name="Fischer G."/>
            <person name="Durrens P."/>
            <person name="Casaregola S."/>
            <person name="Lafontaine I."/>
            <person name="de Montigny J."/>
            <person name="Marck C."/>
            <person name="Neuveglise C."/>
            <person name="Talla E."/>
            <person name="Goffard N."/>
            <person name="Frangeul L."/>
            <person name="Aigle M."/>
            <person name="Anthouard V."/>
            <person name="Babour A."/>
            <person name="Barbe V."/>
            <person name="Barnay S."/>
            <person name="Blanchin S."/>
            <person name="Beckerich J.-M."/>
            <person name="Beyne E."/>
            <person name="Bleykasten C."/>
            <person name="Boisrame A."/>
            <person name="Boyer J."/>
            <person name="Cattolico L."/>
            <person name="Confanioleri F."/>
            <person name="de Daruvar A."/>
            <person name="Despons L."/>
            <person name="Fabre E."/>
            <person name="Fairhead C."/>
            <person name="Ferry-Dumazet H."/>
            <person name="Groppi A."/>
            <person name="Hantraye F."/>
            <person name="Hennequin C."/>
            <person name="Jauniaux N."/>
            <person name="Joyet P."/>
            <person name="Kachouri R."/>
            <person name="Kerrest A."/>
            <person name="Koszul R."/>
            <person name="Lemaire M."/>
            <person name="Lesur I."/>
            <person name="Ma L."/>
            <person name="Muller H."/>
            <person name="Nicaud J.-M."/>
            <person name="Nikolski M."/>
            <person name="Oztas S."/>
            <person name="Ozier-Kalogeropoulos O."/>
            <person name="Pellenz S."/>
            <person name="Potier S."/>
            <person name="Richard G.-F."/>
            <person name="Straub M.-L."/>
            <person name="Suleau A."/>
            <person name="Swennen D."/>
            <person name="Tekaia F."/>
            <person name="Wesolowski-Louvel M."/>
            <person name="Westhof E."/>
            <person name="Wirth B."/>
            <person name="Zeniou-Meyer M."/>
            <person name="Zivanovic Y."/>
            <person name="Bolotin-Fukuhara M."/>
            <person name="Thierry A."/>
            <person name="Bouchier C."/>
            <person name="Caudron B."/>
            <person name="Scarpelli C."/>
            <person name="Gaillardin C."/>
            <person name="Weissenbach J."/>
            <person name="Wincker P."/>
            <person name="Souciet J.-L."/>
        </authorList>
    </citation>
    <scope>NUCLEOTIDE SEQUENCE [LARGE SCALE GENOMIC DNA]</scope>
    <source>
        <strain>ATCC 36239 / CBS 767 / BCRC 21394 / JCM 1990 / NBRC 0083 / IGC 2968</strain>
    </source>
</reference>
<keyword id="KW-0256">Endoplasmic reticulum</keyword>
<keyword id="KW-0333">Golgi apparatus</keyword>
<keyword id="KW-0472">Membrane</keyword>
<keyword id="KW-1185">Reference proteome</keyword>
<keyword id="KW-0812">Transmembrane</keyword>
<keyword id="KW-1133">Transmembrane helix</keyword>
<sequence length="177" mass="19747">MSYQNQAKSFLSTIDEKTKDLQILRQFELKTGLPRSYAILGGFGLYFVLIFLNIGGVGQLLSNIAGLVIPGYFSLLALESTTTSDDTQLLTYWVVFATFNVVEFWSKAILYWIPFYYLFKTVFLVYIGIPSTGGAVTVYNAAIKPFSRRYIVNNKKFAQDINNAAQGVSSSVELLAS</sequence>
<feature type="chain" id="PRO_0000101851" description="Protein YOP1">
    <location>
        <begin position="1"/>
        <end position="177"/>
    </location>
</feature>
<feature type="topological domain" description="Cytoplasmic" evidence="1">
    <location>
        <begin position="1"/>
        <end position="34"/>
    </location>
</feature>
<feature type="transmembrane region" description="Helical" evidence="1">
    <location>
        <begin position="35"/>
        <end position="54"/>
    </location>
</feature>
<feature type="topological domain" description="Lumenal" evidence="1">
    <location>
        <begin position="55"/>
        <end position="56"/>
    </location>
</feature>
<feature type="transmembrane region" description="Helical" evidence="1">
    <location>
        <begin position="57"/>
        <end position="76"/>
    </location>
</feature>
<feature type="topological domain" description="Cytoplasmic" evidence="1">
    <location>
        <begin position="77"/>
        <end position="87"/>
    </location>
</feature>
<feature type="transmembrane region" description="Helical" evidence="1">
    <location>
        <begin position="88"/>
        <end position="104"/>
    </location>
</feature>
<feature type="topological domain" description="Lumenal" evidence="1">
    <location>
        <begin position="105"/>
        <end position="107"/>
    </location>
</feature>
<feature type="transmembrane region" description="Helical" evidence="1">
    <location>
        <begin position="108"/>
        <end position="126"/>
    </location>
</feature>
<feature type="topological domain" description="Cytoplasmic" evidence="1">
    <location>
        <begin position="127"/>
        <end position="177"/>
    </location>
</feature>
<organism>
    <name type="scientific">Debaryomyces hansenii (strain ATCC 36239 / CBS 767 / BCRC 21394 / JCM 1990 / NBRC 0083 / IGC 2968)</name>
    <name type="common">Yeast</name>
    <name type="synonym">Torulaspora hansenii</name>
    <dbReference type="NCBI Taxonomy" id="284592"/>
    <lineage>
        <taxon>Eukaryota</taxon>
        <taxon>Fungi</taxon>
        <taxon>Dikarya</taxon>
        <taxon>Ascomycota</taxon>
        <taxon>Saccharomycotina</taxon>
        <taxon>Pichiomycetes</taxon>
        <taxon>Debaryomycetaceae</taxon>
        <taxon>Debaryomyces</taxon>
    </lineage>
</organism>
<evidence type="ECO:0000250" key="1">
    <source>
        <dbReference type="UniProtKB" id="Q12402"/>
    </source>
</evidence>
<evidence type="ECO:0000255" key="2"/>
<evidence type="ECO:0000305" key="3"/>
<name>YOP1_DEBHA</name>
<proteinExistence type="inferred from homology"/>
<comment type="function">
    <text evidence="1">Required to generate and maintain the structure of the tubular endoplasmic reticulum network and the vacuole. Induces high curvature in membranes and causes membrane tubule formation. Involved in membrane/vesicle trafficking.</text>
</comment>
<comment type="subunit">
    <text evidence="1">Oligomer.</text>
</comment>
<comment type="subcellular location">
    <subcellularLocation>
        <location evidence="1">Endoplasmic reticulum membrane</location>
        <topology evidence="1">Multi-pass membrane protein</topology>
    </subcellularLocation>
    <subcellularLocation>
        <location evidence="1">Golgi apparatus membrane</location>
        <topology evidence="2">Multi-pass membrane protein</topology>
    </subcellularLocation>
</comment>
<comment type="domain">
    <text evidence="1">The short lumenal loops between transmembrane domains 1 and 2 and between transmembrane domains 3 and 4 may impart a wedge-like configuration, thus deforming membranes.</text>
</comment>
<comment type="similarity">
    <text evidence="3">Belongs to the DP1 family.</text>
</comment>
<comment type="sequence caution" evidence="3">
    <conflict type="erroneous gene model prediction">
        <sequence resource="EMBL-CDS" id="CAG85445"/>
    </conflict>
</comment>
<dbReference type="EMBL" id="CR382134">
    <property type="protein sequence ID" value="CAG85445.2"/>
    <property type="status" value="ALT_SEQ"/>
    <property type="molecule type" value="Genomic_DNA"/>
</dbReference>
<dbReference type="RefSeq" id="XP_457441.2">
    <property type="nucleotide sequence ID" value="XM_457441.2"/>
</dbReference>
<dbReference type="FunCoup" id="Q6BWH8">
    <property type="interactions" value="373"/>
</dbReference>
<dbReference type="STRING" id="284592.Q6BWH8"/>
<dbReference type="GeneID" id="2913376"/>
<dbReference type="KEGG" id="dha:DEHA2B11264g"/>
<dbReference type="eggNOG" id="KOG1725">
    <property type="taxonomic scope" value="Eukaryota"/>
</dbReference>
<dbReference type="HOGENOM" id="CLU_028431_2_1_1"/>
<dbReference type="InParanoid" id="Q6BWH8"/>
<dbReference type="OrthoDB" id="10009287at2759"/>
<dbReference type="Proteomes" id="UP000000599">
    <property type="component" value="Chromosome B"/>
</dbReference>
<dbReference type="GO" id="GO:0005789">
    <property type="term" value="C:endoplasmic reticulum membrane"/>
    <property type="evidence" value="ECO:0007669"/>
    <property type="project" value="UniProtKB-SubCell"/>
</dbReference>
<dbReference type="GO" id="GO:0000139">
    <property type="term" value="C:Golgi membrane"/>
    <property type="evidence" value="ECO:0007669"/>
    <property type="project" value="UniProtKB-SubCell"/>
</dbReference>
<dbReference type="InterPro" id="IPR004345">
    <property type="entry name" value="TB2_DP1_HVA22"/>
</dbReference>
<dbReference type="PANTHER" id="PTHR12300">
    <property type="entry name" value="HVA22-LIKE PROTEINS"/>
    <property type="match status" value="1"/>
</dbReference>
<dbReference type="PANTHER" id="PTHR12300:SF161">
    <property type="entry name" value="RECEPTOR EXPRESSION-ENHANCING PROTEIN"/>
    <property type="match status" value="1"/>
</dbReference>
<dbReference type="Pfam" id="PF03134">
    <property type="entry name" value="TB2_DP1_HVA22"/>
    <property type="match status" value="1"/>
</dbReference>